<gene>
    <name evidence="1" type="primary">nuoD</name>
    <name type="ordered locus">CT0769</name>
</gene>
<name>NUOD_CHLTE</name>
<protein>
    <recommendedName>
        <fullName evidence="1">NADH-quinone oxidoreductase subunit D</fullName>
        <ecNumber evidence="1">7.1.1.-</ecNumber>
    </recommendedName>
    <alternativeName>
        <fullName evidence="1">NADH dehydrogenase I subunit D</fullName>
    </alternativeName>
    <alternativeName>
        <fullName evidence="1">NDH-1 subunit D</fullName>
    </alternativeName>
</protein>
<evidence type="ECO:0000255" key="1">
    <source>
        <dbReference type="HAMAP-Rule" id="MF_01358"/>
    </source>
</evidence>
<evidence type="ECO:0000305" key="2"/>
<feature type="chain" id="PRO_0000357798" description="NADH-quinone oxidoreductase subunit D">
    <location>
        <begin position="1"/>
        <end position="400"/>
    </location>
</feature>
<organism>
    <name type="scientific">Chlorobaculum tepidum (strain ATCC 49652 / DSM 12025 / NBRC 103806 / TLS)</name>
    <name type="common">Chlorobium tepidum</name>
    <dbReference type="NCBI Taxonomy" id="194439"/>
    <lineage>
        <taxon>Bacteria</taxon>
        <taxon>Pseudomonadati</taxon>
        <taxon>Chlorobiota</taxon>
        <taxon>Chlorobiia</taxon>
        <taxon>Chlorobiales</taxon>
        <taxon>Chlorobiaceae</taxon>
        <taxon>Chlorobaculum</taxon>
    </lineage>
</organism>
<proteinExistence type="inferred from homology"/>
<dbReference type="EC" id="7.1.1.-" evidence="1"/>
<dbReference type="EMBL" id="AE006470">
    <property type="protein sequence ID" value="AAM72006.1"/>
    <property type="status" value="ALT_INIT"/>
    <property type="molecule type" value="Genomic_DNA"/>
</dbReference>
<dbReference type="RefSeq" id="NP_661664.1">
    <property type="nucleotide sequence ID" value="NC_002932.3"/>
</dbReference>
<dbReference type="RefSeq" id="WP_164926925.1">
    <property type="nucleotide sequence ID" value="NC_002932.3"/>
</dbReference>
<dbReference type="SMR" id="Q8KEC0"/>
<dbReference type="STRING" id="194439.CT0769"/>
<dbReference type="EnsemblBacteria" id="AAM72006">
    <property type="protein sequence ID" value="AAM72006"/>
    <property type="gene ID" value="CT0769"/>
</dbReference>
<dbReference type="KEGG" id="cte:CT0769"/>
<dbReference type="PATRIC" id="fig|194439.7.peg.700"/>
<dbReference type="eggNOG" id="COG0649">
    <property type="taxonomic scope" value="Bacteria"/>
</dbReference>
<dbReference type="HOGENOM" id="CLU_015134_1_2_10"/>
<dbReference type="OrthoDB" id="9801496at2"/>
<dbReference type="Proteomes" id="UP000001007">
    <property type="component" value="Chromosome"/>
</dbReference>
<dbReference type="GO" id="GO:0005886">
    <property type="term" value="C:plasma membrane"/>
    <property type="evidence" value="ECO:0007669"/>
    <property type="project" value="UniProtKB-SubCell"/>
</dbReference>
<dbReference type="GO" id="GO:0051287">
    <property type="term" value="F:NAD binding"/>
    <property type="evidence" value="ECO:0007669"/>
    <property type="project" value="InterPro"/>
</dbReference>
<dbReference type="GO" id="GO:0050136">
    <property type="term" value="F:NADH:ubiquinone reductase (non-electrogenic) activity"/>
    <property type="evidence" value="ECO:0007669"/>
    <property type="project" value="UniProtKB-UniRule"/>
</dbReference>
<dbReference type="GO" id="GO:0048038">
    <property type="term" value="F:quinone binding"/>
    <property type="evidence" value="ECO:0007669"/>
    <property type="project" value="UniProtKB-KW"/>
</dbReference>
<dbReference type="Gene3D" id="1.10.645.10">
    <property type="entry name" value="Cytochrome-c3 Hydrogenase, chain B"/>
    <property type="match status" value="1"/>
</dbReference>
<dbReference type="HAMAP" id="MF_01358">
    <property type="entry name" value="NDH1_NuoD"/>
    <property type="match status" value="1"/>
</dbReference>
<dbReference type="InterPro" id="IPR001135">
    <property type="entry name" value="NADH_Q_OxRdtase_suD"/>
</dbReference>
<dbReference type="InterPro" id="IPR022885">
    <property type="entry name" value="NDH1_su_D/H"/>
</dbReference>
<dbReference type="InterPro" id="IPR029014">
    <property type="entry name" value="NiFe-Hase_large"/>
</dbReference>
<dbReference type="NCBIfam" id="NF004739">
    <property type="entry name" value="PRK06075.1"/>
    <property type="match status" value="1"/>
</dbReference>
<dbReference type="PANTHER" id="PTHR11993:SF10">
    <property type="entry name" value="NADH DEHYDROGENASE [UBIQUINONE] IRON-SULFUR PROTEIN 2, MITOCHONDRIAL"/>
    <property type="match status" value="1"/>
</dbReference>
<dbReference type="PANTHER" id="PTHR11993">
    <property type="entry name" value="NADH-UBIQUINONE OXIDOREDUCTASE 49 KDA SUBUNIT"/>
    <property type="match status" value="1"/>
</dbReference>
<dbReference type="Pfam" id="PF00346">
    <property type="entry name" value="Complex1_49kDa"/>
    <property type="match status" value="1"/>
</dbReference>
<dbReference type="SUPFAM" id="SSF56762">
    <property type="entry name" value="HydB/Nqo4-like"/>
    <property type="match status" value="1"/>
</dbReference>
<comment type="function">
    <text evidence="1">NDH-1 shuttles electrons from NADH, via FMN and iron-sulfur (Fe-S) centers, to quinones in the respiratory chain. The immediate electron acceptor for the enzyme in this species is believed to be a menaquinone. Couples the redox reaction to proton translocation (for every two electrons transferred, four hydrogen ions are translocated across the cytoplasmic membrane), and thus conserves the redox energy in a proton gradient.</text>
</comment>
<comment type="catalytic activity">
    <reaction evidence="1">
        <text>a quinone + NADH + 5 H(+)(in) = a quinol + NAD(+) + 4 H(+)(out)</text>
        <dbReference type="Rhea" id="RHEA:57888"/>
        <dbReference type="ChEBI" id="CHEBI:15378"/>
        <dbReference type="ChEBI" id="CHEBI:24646"/>
        <dbReference type="ChEBI" id="CHEBI:57540"/>
        <dbReference type="ChEBI" id="CHEBI:57945"/>
        <dbReference type="ChEBI" id="CHEBI:132124"/>
    </reaction>
</comment>
<comment type="subunit">
    <text evidence="1">NDH-1 is composed of 14 different subunits. Subunits NuoB, C, D, E, F, and G constitute the peripheral sector of the complex.</text>
</comment>
<comment type="subcellular location">
    <subcellularLocation>
        <location evidence="1">Cell inner membrane</location>
        <topology evidence="1">Peripheral membrane protein</topology>
        <orientation evidence="1">Cytoplasmic side</orientation>
    </subcellularLocation>
</comment>
<comment type="similarity">
    <text evidence="1">Belongs to the complex I 49 kDa subunit family.</text>
</comment>
<comment type="sequence caution" evidence="2">
    <conflict type="erroneous initiation">
        <sequence resource="EMBL-CDS" id="AAM72006"/>
    </conflict>
</comment>
<sequence length="400" mass="45518">MQELGKAETNSTRIIRQDDKRVTIEKDLDTEHMVLSMGPQHPSTHGVLRLECITDGEVVVEAEPYLGYLHRCFEKHCEKIDYPAIVPYTDRMDYLAGMNNELAYCITVEKLLDIEIPRRVEFIRVIVAELNRIASHLVAIGTYAIDLGAFTPFLFCFRDREHIMSLLEWISGARMLYNYIWIGGLAYDVPADFKTRVAEFVTYFRPKAKELYQLLTENEIFVKRTYDIGIMPADVAINYGWSGPMLRGSGVKWDLRRNDPYSVYPELDFDVPVPDGKFSVVGDCLSRHLVRALEMEESLKIIEQCLDKMPEEPNFNSRALIPKKIRPKAGEVYGRAENPRGELGYYIVSDGKSTSPVRCKARSSCFVNLSAMKDLSKGQLIPDLVAIIGSIDIVLGEVDR</sequence>
<reference key="1">
    <citation type="journal article" date="2002" name="Proc. Natl. Acad. Sci. U.S.A.">
        <title>The complete genome sequence of Chlorobium tepidum TLS, a photosynthetic, anaerobic, green-sulfur bacterium.</title>
        <authorList>
            <person name="Eisen J.A."/>
            <person name="Nelson K.E."/>
            <person name="Paulsen I.T."/>
            <person name="Heidelberg J.F."/>
            <person name="Wu M."/>
            <person name="Dodson R.J."/>
            <person name="DeBoy R.T."/>
            <person name="Gwinn M.L."/>
            <person name="Nelson W.C."/>
            <person name="Haft D.H."/>
            <person name="Hickey E.K."/>
            <person name="Peterson J.D."/>
            <person name="Durkin A.S."/>
            <person name="Kolonay J.F."/>
            <person name="Yang F."/>
            <person name="Holt I.E."/>
            <person name="Umayam L.A."/>
            <person name="Mason T.M."/>
            <person name="Brenner M."/>
            <person name="Shea T.P."/>
            <person name="Parksey D.S."/>
            <person name="Nierman W.C."/>
            <person name="Feldblyum T.V."/>
            <person name="Hansen C.L."/>
            <person name="Craven M.B."/>
            <person name="Radune D."/>
            <person name="Vamathevan J.J."/>
            <person name="Khouri H.M."/>
            <person name="White O."/>
            <person name="Gruber T.M."/>
            <person name="Ketchum K.A."/>
            <person name="Venter J.C."/>
            <person name="Tettelin H."/>
            <person name="Bryant D.A."/>
            <person name="Fraser C.M."/>
        </authorList>
    </citation>
    <scope>NUCLEOTIDE SEQUENCE [LARGE SCALE GENOMIC DNA]</scope>
    <source>
        <strain>ATCC 49652 / DSM 12025 / NBRC 103806 / TLS</strain>
    </source>
</reference>
<keyword id="KW-0997">Cell inner membrane</keyword>
<keyword id="KW-1003">Cell membrane</keyword>
<keyword id="KW-0472">Membrane</keyword>
<keyword id="KW-0520">NAD</keyword>
<keyword id="KW-0874">Quinone</keyword>
<keyword id="KW-1185">Reference proteome</keyword>
<keyword id="KW-1278">Translocase</keyword>
<keyword id="KW-0813">Transport</keyword>
<accession>Q8KEC0</accession>